<accession>Q0AG56</accession>
<organism>
    <name type="scientific">Nitrosomonas eutropha (strain DSM 101675 / C91 / Nm57)</name>
    <dbReference type="NCBI Taxonomy" id="335283"/>
    <lineage>
        <taxon>Bacteria</taxon>
        <taxon>Pseudomonadati</taxon>
        <taxon>Pseudomonadota</taxon>
        <taxon>Betaproteobacteria</taxon>
        <taxon>Nitrosomonadales</taxon>
        <taxon>Nitrosomonadaceae</taxon>
        <taxon>Nitrosomonas</taxon>
    </lineage>
</organism>
<gene>
    <name evidence="1" type="primary">queA</name>
    <name type="ordered locus">Neut_1430</name>
</gene>
<reference key="1">
    <citation type="journal article" date="2007" name="Environ. Microbiol.">
        <title>Whole-genome analysis of the ammonia-oxidizing bacterium, Nitrosomonas eutropha C91: implications for niche adaptation.</title>
        <authorList>
            <person name="Stein L.Y."/>
            <person name="Arp D.J."/>
            <person name="Berube P.M."/>
            <person name="Chain P.S."/>
            <person name="Hauser L."/>
            <person name="Jetten M.S."/>
            <person name="Klotz M.G."/>
            <person name="Larimer F.W."/>
            <person name="Norton J.M."/>
            <person name="Op den Camp H.J.M."/>
            <person name="Shin M."/>
            <person name="Wei X."/>
        </authorList>
    </citation>
    <scope>NUCLEOTIDE SEQUENCE [LARGE SCALE GENOMIC DNA]</scope>
    <source>
        <strain>DSM 101675 / C91 / Nm57</strain>
    </source>
</reference>
<evidence type="ECO:0000255" key="1">
    <source>
        <dbReference type="HAMAP-Rule" id="MF_00113"/>
    </source>
</evidence>
<feature type="chain" id="PRO_1000015237" description="S-adenosylmethionine:tRNA ribosyltransferase-isomerase">
    <location>
        <begin position="1"/>
        <end position="346"/>
    </location>
</feature>
<name>QUEA_NITEC</name>
<dbReference type="EC" id="2.4.99.17" evidence="1"/>
<dbReference type="EMBL" id="CP000450">
    <property type="protein sequence ID" value="ABI59676.1"/>
    <property type="molecule type" value="Genomic_DNA"/>
</dbReference>
<dbReference type="RefSeq" id="WP_011634482.1">
    <property type="nucleotide sequence ID" value="NC_008344.1"/>
</dbReference>
<dbReference type="SMR" id="Q0AG56"/>
<dbReference type="STRING" id="335283.Neut_1430"/>
<dbReference type="KEGG" id="net:Neut_1430"/>
<dbReference type="eggNOG" id="COG0809">
    <property type="taxonomic scope" value="Bacteria"/>
</dbReference>
<dbReference type="HOGENOM" id="CLU_039110_1_0_4"/>
<dbReference type="OrthoDB" id="9805933at2"/>
<dbReference type="UniPathway" id="UPA00392"/>
<dbReference type="Proteomes" id="UP000001966">
    <property type="component" value="Chromosome"/>
</dbReference>
<dbReference type="GO" id="GO:0005737">
    <property type="term" value="C:cytoplasm"/>
    <property type="evidence" value="ECO:0007669"/>
    <property type="project" value="UniProtKB-SubCell"/>
</dbReference>
<dbReference type="GO" id="GO:0051075">
    <property type="term" value="F:S-adenosylmethionine:tRNA ribosyltransferase-isomerase activity"/>
    <property type="evidence" value="ECO:0007669"/>
    <property type="project" value="UniProtKB-EC"/>
</dbReference>
<dbReference type="GO" id="GO:0008616">
    <property type="term" value="P:queuosine biosynthetic process"/>
    <property type="evidence" value="ECO:0007669"/>
    <property type="project" value="UniProtKB-UniRule"/>
</dbReference>
<dbReference type="GO" id="GO:0002099">
    <property type="term" value="P:tRNA wobble guanine modification"/>
    <property type="evidence" value="ECO:0007669"/>
    <property type="project" value="TreeGrafter"/>
</dbReference>
<dbReference type="FunFam" id="3.40.1780.10:FF:000001">
    <property type="entry name" value="S-adenosylmethionine:tRNA ribosyltransferase-isomerase"/>
    <property type="match status" value="1"/>
</dbReference>
<dbReference type="Gene3D" id="2.40.10.240">
    <property type="entry name" value="QueA-like"/>
    <property type="match status" value="1"/>
</dbReference>
<dbReference type="Gene3D" id="3.40.1780.10">
    <property type="entry name" value="QueA-like"/>
    <property type="match status" value="1"/>
</dbReference>
<dbReference type="HAMAP" id="MF_00113">
    <property type="entry name" value="QueA"/>
    <property type="match status" value="1"/>
</dbReference>
<dbReference type="InterPro" id="IPR003699">
    <property type="entry name" value="QueA"/>
</dbReference>
<dbReference type="InterPro" id="IPR042118">
    <property type="entry name" value="QueA_dom1"/>
</dbReference>
<dbReference type="InterPro" id="IPR042119">
    <property type="entry name" value="QueA_dom2"/>
</dbReference>
<dbReference type="InterPro" id="IPR036100">
    <property type="entry name" value="QueA_sf"/>
</dbReference>
<dbReference type="NCBIfam" id="NF001140">
    <property type="entry name" value="PRK00147.1"/>
    <property type="match status" value="1"/>
</dbReference>
<dbReference type="NCBIfam" id="TIGR00113">
    <property type="entry name" value="queA"/>
    <property type="match status" value="1"/>
</dbReference>
<dbReference type="PANTHER" id="PTHR30307">
    <property type="entry name" value="S-ADENOSYLMETHIONINE:TRNA RIBOSYLTRANSFERASE-ISOMERASE"/>
    <property type="match status" value="1"/>
</dbReference>
<dbReference type="PANTHER" id="PTHR30307:SF0">
    <property type="entry name" value="S-ADENOSYLMETHIONINE:TRNA RIBOSYLTRANSFERASE-ISOMERASE"/>
    <property type="match status" value="1"/>
</dbReference>
<dbReference type="Pfam" id="PF02547">
    <property type="entry name" value="Queuosine_synth"/>
    <property type="match status" value="1"/>
</dbReference>
<dbReference type="SUPFAM" id="SSF111337">
    <property type="entry name" value="QueA-like"/>
    <property type="match status" value="1"/>
</dbReference>
<keyword id="KW-0963">Cytoplasm</keyword>
<keyword id="KW-0671">Queuosine biosynthesis</keyword>
<keyword id="KW-0949">S-adenosyl-L-methionine</keyword>
<keyword id="KW-0808">Transferase</keyword>
<sequence length="346" mass="38257">MKTDDFDFSLPNELIAQLPLANRADSRMLYINSRQSDLRDAAFKDLPAYLKQGDVIVFNNTRVVKARLAGFKSTGGKVEVMIERILGTHQARALIRASHAPAIGSTLLLENAITVQVEAREQDIYTLRFIHSQPLIELLDQYGHTPLPPYIGRIATASDESRYQTVFAQETGAVAAPTAGLHFDETMLTTLQTLGIKIAWVTLHVGAGTFQPVRVENINQHIMHTEQYHIPTETIEIIRRCKAGGGSVLAVGTTSLRALEASALIGDGELVAGSNETNLFITPGFQFRVVDRLLTNFHLPRSTLLMLVSAFAGIETIRHAYQHAVNNHYRFFSYGDAMLIEGDSRS</sequence>
<proteinExistence type="inferred from homology"/>
<comment type="function">
    <text evidence="1">Transfers and isomerizes the ribose moiety from AdoMet to the 7-aminomethyl group of 7-deazaguanine (preQ1-tRNA) to give epoxyqueuosine (oQ-tRNA).</text>
</comment>
<comment type="catalytic activity">
    <reaction evidence="1">
        <text>7-aminomethyl-7-carbaguanosine(34) in tRNA + S-adenosyl-L-methionine = epoxyqueuosine(34) in tRNA + adenine + L-methionine + 2 H(+)</text>
        <dbReference type="Rhea" id="RHEA:32155"/>
        <dbReference type="Rhea" id="RHEA-COMP:10342"/>
        <dbReference type="Rhea" id="RHEA-COMP:18582"/>
        <dbReference type="ChEBI" id="CHEBI:15378"/>
        <dbReference type="ChEBI" id="CHEBI:16708"/>
        <dbReference type="ChEBI" id="CHEBI:57844"/>
        <dbReference type="ChEBI" id="CHEBI:59789"/>
        <dbReference type="ChEBI" id="CHEBI:82833"/>
        <dbReference type="ChEBI" id="CHEBI:194443"/>
        <dbReference type="EC" id="2.4.99.17"/>
    </reaction>
</comment>
<comment type="pathway">
    <text evidence="1">tRNA modification; tRNA-queuosine biosynthesis.</text>
</comment>
<comment type="subunit">
    <text evidence="1">Monomer.</text>
</comment>
<comment type="subcellular location">
    <subcellularLocation>
        <location evidence="1">Cytoplasm</location>
    </subcellularLocation>
</comment>
<comment type="similarity">
    <text evidence="1">Belongs to the QueA family.</text>
</comment>
<protein>
    <recommendedName>
        <fullName evidence="1">S-adenosylmethionine:tRNA ribosyltransferase-isomerase</fullName>
        <ecNumber evidence="1">2.4.99.17</ecNumber>
    </recommendedName>
    <alternativeName>
        <fullName evidence="1">Queuosine biosynthesis protein QueA</fullName>
    </alternativeName>
</protein>